<organism>
    <name type="scientific">Yersinia pestis</name>
    <dbReference type="NCBI Taxonomy" id="632"/>
    <lineage>
        <taxon>Bacteria</taxon>
        <taxon>Pseudomonadati</taxon>
        <taxon>Pseudomonadota</taxon>
        <taxon>Gammaproteobacteria</taxon>
        <taxon>Enterobacterales</taxon>
        <taxon>Yersiniaceae</taxon>
        <taxon>Yersinia</taxon>
    </lineage>
</organism>
<keyword id="KW-0054">Arabinose catabolism</keyword>
<keyword id="KW-0119">Carbohydrate metabolism</keyword>
<keyword id="KW-0413">Isomerase</keyword>
<keyword id="KW-0464">Manganese</keyword>
<keyword id="KW-0479">Metal-binding</keyword>
<keyword id="KW-1185">Reference proteome</keyword>
<sequence>MDVFKQSEVWFVIGSQNLYGPKTLQQVMDNAHQVVNSLNNEAGLPVKLVLKPLVTTPDEITALCREANYDTACIGIMTWLHTFSPAKMWIGGLSILNKPLLQFHTQFNAQIPWKTMDMDFMNLNQTAHGGREFGFIGARMRQQHSVITGHWQDKEAHQRIGQWMRVAAAKQESQQLKVARFGDNMREVAVTEGDKVAAQIQFGYSVNAYGIGDLVAVVDAVSKGDIDTLVEEYEATYRFTDAVKLNGDKRENLLDAARIELGMTRFLEQGGFKAFTTNFENLYGLKQLPGLAVQRLMQQGYGFGGEGDWKTAALLRILKVMGTGLKGGTSFMEDYTYNFQPGNDLVVGSHMLEVCPSIAKEEKPLLDVQHLGIGGKADPARLIFSTPAGPALNASLIDMGNRFRLLVNVVDTVEQPHPLPKLPVARAIWQAQPSLATAAEAWIIAGGAHHTVFSQAVGVDELRLYAEMHGIEFLLIDNDTTLPAFKNEIRWNEVYYQLNR</sequence>
<proteinExistence type="inferred from homology"/>
<reference key="1">
    <citation type="journal article" date="2001" name="Nature">
        <title>Genome sequence of Yersinia pestis, the causative agent of plague.</title>
        <authorList>
            <person name="Parkhill J."/>
            <person name="Wren B.W."/>
            <person name="Thomson N.R."/>
            <person name="Titball R.W."/>
            <person name="Holden M.T.G."/>
            <person name="Prentice M.B."/>
            <person name="Sebaihia M."/>
            <person name="James K.D."/>
            <person name="Churcher C.M."/>
            <person name="Mungall K.L."/>
            <person name="Baker S."/>
            <person name="Basham D."/>
            <person name="Bentley S.D."/>
            <person name="Brooks K."/>
            <person name="Cerdeno-Tarraga A.-M."/>
            <person name="Chillingworth T."/>
            <person name="Cronin A."/>
            <person name="Davies R.M."/>
            <person name="Davis P."/>
            <person name="Dougan G."/>
            <person name="Feltwell T."/>
            <person name="Hamlin N."/>
            <person name="Holroyd S."/>
            <person name="Jagels K."/>
            <person name="Karlyshev A.V."/>
            <person name="Leather S."/>
            <person name="Moule S."/>
            <person name="Oyston P.C.F."/>
            <person name="Quail M.A."/>
            <person name="Rutherford K.M."/>
            <person name="Simmonds M."/>
            <person name="Skelton J."/>
            <person name="Stevens K."/>
            <person name="Whitehead S."/>
            <person name="Barrell B.G."/>
        </authorList>
    </citation>
    <scope>NUCLEOTIDE SEQUENCE [LARGE SCALE GENOMIC DNA]</scope>
    <source>
        <strain>CO-92 / Biovar Orientalis</strain>
    </source>
</reference>
<reference key="2">
    <citation type="journal article" date="2002" name="J. Bacteriol.">
        <title>Genome sequence of Yersinia pestis KIM.</title>
        <authorList>
            <person name="Deng W."/>
            <person name="Burland V."/>
            <person name="Plunkett G. III"/>
            <person name="Boutin A."/>
            <person name="Mayhew G.F."/>
            <person name="Liss P."/>
            <person name="Perna N.T."/>
            <person name="Rose D.J."/>
            <person name="Mau B."/>
            <person name="Zhou S."/>
            <person name="Schwartz D.C."/>
            <person name="Fetherston J.D."/>
            <person name="Lindler L.E."/>
            <person name="Brubaker R.R."/>
            <person name="Plano G.V."/>
            <person name="Straley S.C."/>
            <person name="McDonough K.A."/>
            <person name="Nilles M.L."/>
            <person name="Matson J.S."/>
            <person name="Blattner F.R."/>
            <person name="Perry R.D."/>
        </authorList>
    </citation>
    <scope>NUCLEOTIDE SEQUENCE [LARGE SCALE GENOMIC DNA]</scope>
    <source>
        <strain>KIM10+ / Biovar Mediaevalis</strain>
    </source>
</reference>
<reference key="3">
    <citation type="journal article" date="2004" name="DNA Res.">
        <title>Complete genome sequence of Yersinia pestis strain 91001, an isolate avirulent to humans.</title>
        <authorList>
            <person name="Song Y."/>
            <person name="Tong Z."/>
            <person name="Wang J."/>
            <person name="Wang L."/>
            <person name="Guo Z."/>
            <person name="Han Y."/>
            <person name="Zhang J."/>
            <person name="Pei D."/>
            <person name="Zhou D."/>
            <person name="Qin H."/>
            <person name="Pang X."/>
            <person name="Han Y."/>
            <person name="Zhai J."/>
            <person name="Li M."/>
            <person name="Cui B."/>
            <person name="Qi Z."/>
            <person name="Jin L."/>
            <person name="Dai R."/>
            <person name="Chen F."/>
            <person name="Li S."/>
            <person name="Ye C."/>
            <person name="Du Z."/>
            <person name="Lin W."/>
            <person name="Wang J."/>
            <person name="Yu J."/>
            <person name="Yang H."/>
            <person name="Wang J."/>
            <person name="Huang P."/>
            <person name="Yang R."/>
        </authorList>
    </citation>
    <scope>NUCLEOTIDE SEQUENCE [LARGE SCALE GENOMIC DNA]</scope>
    <source>
        <strain>91001 / Biovar Mediaevalis</strain>
    </source>
</reference>
<evidence type="ECO:0000255" key="1">
    <source>
        <dbReference type="HAMAP-Rule" id="MF_00519"/>
    </source>
</evidence>
<comment type="function">
    <text evidence="1">Catalyzes the conversion of L-arabinose to L-ribulose.</text>
</comment>
<comment type="catalytic activity">
    <reaction evidence="1">
        <text>beta-L-arabinopyranose = L-ribulose</text>
        <dbReference type="Rhea" id="RHEA:14821"/>
        <dbReference type="ChEBI" id="CHEBI:16880"/>
        <dbReference type="ChEBI" id="CHEBI:40886"/>
        <dbReference type="EC" id="5.3.1.4"/>
    </reaction>
</comment>
<comment type="cofactor">
    <cofactor evidence="1">
        <name>Mn(2+)</name>
        <dbReference type="ChEBI" id="CHEBI:29035"/>
    </cofactor>
    <text evidence="1">Binds 1 Mn(2+) ion per subunit.</text>
</comment>
<comment type="pathway">
    <text evidence="1">Carbohydrate degradation; L-arabinose degradation via L-ribulose; D-xylulose 5-phosphate from L-arabinose (bacterial route): step 1/3.</text>
</comment>
<comment type="subunit">
    <text evidence="1">Homohexamer.</text>
</comment>
<comment type="similarity">
    <text evidence="1">Belongs to the arabinose isomerase family.</text>
</comment>
<feature type="chain" id="PRO_0000198395" description="L-arabinose isomerase">
    <location>
        <begin position="1"/>
        <end position="500"/>
    </location>
</feature>
<feature type="binding site" evidence="1">
    <location>
        <position position="306"/>
    </location>
    <ligand>
        <name>Mn(2+)</name>
        <dbReference type="ChEBI" id="CHEBI:29035"/>
    </ligand>
</feature>
<feature type="binding site" evidence="1">
    <location>
        <position position="333"/>
    </location>
    <ligand>
        <name>Mn(2+)</name>
        <dbReference type="ChEBI" id="CHEBI:29035"/>
    </ligand>
</feature>
<feature type="binding site" evidence="1">
    <location>
        <position position="350"/>
    </location>
    <ligand>
        <name>Mn(2+)</name>
        <dbReference type="ChEBI" id="CHEBI:29035"/>
    </ligand>
</feature>
<feature type="binding site" evidence="1">
    <location>
        <position position="450"/>
    </location>
    <ligand>
        <name>Mn(2+)</name>
        <dbReference type="ChEBI" id="CHEBI:29035"/>
    </ligand>
</feature>
<name>ARAA_YERPE</name>
<protein>
    <recommendedName>
        <fullName evidence="1">L-arabinose isomerase</fullName>
        <ecNumber evidence="1">5.3.1.4</ecNumber>
    </recommendedName>
</protein>
<dbReference type="EC" id="5.3.1.4" evidence="1"/>
<dbReference type="EMBL" id="AL590842">
    <property type="protein sequence ID" value="CAL20880.1"/>
    <property type="molecule type" value="Genomic_DNA"/>
</dbReference>
<dbReference type="EMBL" id="AE009952">
    <property type="protein sequence ID" value="AAM85657.1"/>
    <property type="molecule type" value="Genomic_DNA"/>
</dbReference>
<dbReference type="EMBL" id="AE017042">
    <property type="protein sequence ID" value="AAS62263.1"/>
    <property type="molecule type" value="Genomic_DNA"/>
</dbReference>
<dbReference type="PIR" id="AE0274">
    <property type="entry name" value="AE0274"/>
</dbReference>
<dbReference type="RefSeq" id="WP_002210591.1">
    <property type="nucleotide sequence ID" value="NZ_WUCM01000001.1"/>
</dbReference>
<dbReference type="RefSeq" id="YP_002347220.1">
    <property type="nucleotide sequence ID" value="NC_003143.1"/>
</dbReference>
<dbReference type="SMR" id="P58540"/>
<dbReference type="STRING" id="214092.YPO2253"/>
<dbReference type="PaxDb" id="214092-YPO2253"/>
<dbReference type="DNASU" id="1147041"/>
<dbReference type="EnsemblBacteria" id="AAS62263">
    <property type="protein sequence ID" value="AAS62263"/>
    <property type="gene ID" value="YP_2049"/>
</dbReference>
<dbReference type="GeneID" id="57976417"/>
<dbReference type="KEGG" id="ype:YPO2253"/>
<dbReference type="KEGG" id="ypk:y2094"/>
<dbReference type="KEGG" id="ypm:YP_2049"/>
<dbReference type="PATRIC" id="fig|214092.21.peg.2649"/>
<dbReference type="eggNOG" id="COG2160">
    <property type="taxonomic scope" value="Bacteria"/>
</dbReference>
<dbReference type="HOGENOM" id="CLU_045663_0_0_6"/>
<dbReference type="OMA" id="LMEDYTY"/>
<dbReference type="OrthoDB" id="9765600at2"/>
<dbReference type="BRENDA" id="5.3.1.4">
    <property type="organism ID" value="4559"/>
</dbReference>
<dbReference type="UniPathway" id="UPA00145">
    <property type="reaction ID" value="UER00565"/>
</dbReference>
<dbReference type="Proteomes" id="UP000000815">
    <property type="component" value="Chromosome"/>
</dbReference>
<dbReference type="Proteomes" id="UP000001019">
    <property type="component" value="Chromosome"/>
</dbReference>
<dbReference type="Proteomes" id="UP000002490">
    <property type="component" value="Chromosome"/>
</dbReference>
<dbReference type="GO" id="GO:0005829">
    <property type="term" value="C:cytosol"/>
    <property type="evidence" value="ECO:0000318"/>
    <property type="project" value="GO_Central"/>
</dbReference>
<dbReference type="GO" id="GO:0008733">
    <property type="term" value="F:L-arabinose isomerase activity"/>
    <property type="evidence" value="ECO:0000318"/>
    <property type="project" value="GO_Central"/>
</dbReference>
<dbReference type="GO" id="GO:0030145">
    <property type="term" value="F:manganese ion binding"/>
    <property type="evidence" value="ECO:0007669"/>
    <property type="project" value="UniProtKB-UniRule"/>
</dbReference>
<dbReference type="GO" id="GO:0019569">
    <property type="term" value="P:L-arabinose catabolic process to xylulose 5-phosphate"/>
    <property type="evidence" value="ECO:0000318"/>
    <property type="project" value="GO_Central"/>
</dbReference>
<dbReference type="CDD" id="cd03557">
    <property type="entry name" value="L-arabinose_isomerase"/>
    <property type="match status" value="1"/>
</dbReference>
<dbReference type="FunFam" id="3.40.50.10940:FF:000001">
    <property type="entry name" value="L-arabinose isomerase"/>
    <property type="match status" value="1"/>
</dbReference>
<dbReference type="Gene3D" id="3.40.50.10940">
    <property type="match status" value="1"/>
</dbReference>
<dbReference type="HAMAP" id="MF_00519">
    <property type="entry name" value="Arabinose_Isome"/>
    <property type="match status" value="1"/>
</dbReference>
<dbReference type="InterPro" id="IPR024664">
    <property type="entry name" value="Ara_Isoase_C"/>
</dbReference>
<dbReference type="InterPro" id="IPR055390">
    <property type="entry name" value="AraA_central"/>
</dbReference>
<dbReference type="InterPro" id="IPR055389">
    <property type="entry name" value="AraA_N"/>
</dbReference>
<dbReference type="InterPro" id="IPR038583">
    <property type="entry name" value="AraA_N_sf"/>
</dbReference>
<dbReference type="InterPro" id="IPR004216">
    <property type="entry name" value="Fuc/Ara_isomerase_C"/>
</dbReference>
<dbReference type="InterPro" id="IPR009015">
    <property type="entry name" value="Fucose_isomerase_N/cen_sf"/>
</dbReference>
<dbReference type="InterPro" id="IPR003762">
    <property type="entry name" value="Lara_isomerase"/>
</dbReference>
<dbReference type="NCBIfam" id="NF002795">
    <property type="entry name" value="PRK02929.1"/>
    <property type="match status" value="1"/>
</dbReference>
<dbReference type="PANTHER" id="PTHR38464">
    <property type="entry name" value="L-ARABINOSE ISOMERASE"/>
    <property type="match status" value="1"/>
</dbReference>
<dbReference type="PANTHER" id="PTHR38464:SF1">
    <property type="entry name" value="L-ARABINOSE ISOMERASE"/>
    <property type="match status" value="1"/>
</dbReference>
<dbReference type="Pfam" id="PF24856">
    <property type="entry name" value="AraA_central"/>
    <property type="match status" value="1"/>
</dbReference>
<dbReference type="Pfam" id="PF02610">
    <property type="entry name" value="AraA_N"/>
    <property type="match status" value="1"/>
</dbReference>
<dbReference type="Pfam" id="PF11762">
    <property type="entry name" value="Arabinose_Iso_C"/>
    <property type="match status" value="1"/>
</dbReference>
<dbReference type="PIRSF" id="PIRSF001478">
    <property type="entry name" value="L-ara_isomerase"/>
    <property type="match status" value="1"/>
</dbReference>
<dbReference type="SUPFAM" id="SSF50443">
    <property type="entry name" value="FucI/AraA C-terminal domain-like"/>
    <property type="match status" value="1"/>
</dbReference>
<dbReference type="SUPFAM" id="SSF53743">
    <property type="entry name" value="FucI/AraA N-terminal and middle domains"/>
    <property type="match status" value="1"/>
</dbReference>
<accession>P58540</accession>
<accession>Q0WER8</accession>
<gene>
    <name evidence="1" type="primary">araA</name>
    <name type="ordered locus">YPO2253</name>
    <name type="ordered locus">y2094</name>
    <name type="ordered locus">YP_2049</name>
</gene>